<feature type="chain" id="PRO_0000055098" description="ATP-dependent RNA helicase DeaD">
    <location>
        <begin position="1"/>
        <end position="601"/>
    </location>
</feature>
<feature type="domain" description="Helicase ATP-binding" evidence="1">
    <location>
        <begin position="37"/>
        <end position="208"/>
    </location>
</feature>
<feature type="domain" description="Helicase C-terminal" evidence="1">
    <location>
        <begin position="231"/>
        <end position="378"/>
    </location>
</feature>
<feature type="region of interest" description="Disordered" evidence="2">
    <location>
        <begin position="552"/>
        <end position="601"/>
    </location>
</feature>
<feature type="short sequence motif" description="Q motif">
    <location>
        <begin position="6"/>
        <end position="34"/>
    </location>
</feature>
<feature type="short sequence motif" description="DEAD box">
    <location>
        <begin position="156"/>
        <end position="159"/>
    </location>
</feature>
<feature type="compositionally biased region" description="Basic and acidic residues" evidence="2">
    <location>
        <begin position="552"/>
        <end position="576"/>
    </location>
</feature>
<feature type="binding site" evidence="1">
    <location>
        <begin position="50"/>
        <end position="57"/>
    </location>
    <ligand>
        <name>ATP</name>
        <dbReference type="ChEBI" id="CHEBI:30616"/>
    </ligand>
</feature>
<name>DEAD_BUCAI</name>
<protein>
    <recommendedName>
        <fullName evidence="1">ATP-dependent RNA helicase DeaD</fullName>
        <ecNumber evidence="1">3.6.4.13</ecNumber>
    </recommendedName>
    <alternativeName>
        <fullName evidence="1">Cold-shock DEAD box protein A</fullName>
    </alternativeName>
</protein>
<dbReference type="EC" id="3.6.4.13" evidence="1"/>
<dbReference type="EMBL" id="BA000003">
    <property type="protein sequence ID" value="BAB13076.1"/>
    <property type="molecule type" value="Genomic_DNA"/>
</dbReference>
<dbReference type="RefSeq" id="NP_240190.1">
    <property type="nucleotide sequence ID" value="NC_002528.1"/>
</dbReference>
<dbReference type="RefSeq" id="WP_009874330.1">
    <property type="nucleotide sequence ID" value="NZ_AP036055.1"/>
</dbReference>
<dbReference type="SMR" id="P57453"/>
<dbReference type="STRING" id="563178.BUAP5A_365"/>
<dbReference type="EnsemblBacteria" id="BAB13076">
    <property type="protein sequence ID" value="BAB13076"/>
    <property type="gene ID" value="BAB13076"/>
</dbReference>
<dbReference type="KEGG" id="buc:BU372"/>
<dbReference type="PATRIC" id="fig|107806.10.peg.386"/>
<dbReference type="eggNOG" id="COG0513">
    <property type="taxonomic scope" value="Bacteria"/>
</dbReference>
<dbReference type="HOGENOM" id="CLU_003041_21_1_6"/>
<dbReference type="Proteomes" id="UP000001806">
    <property type="component" value="Chromosome"/>
</dbReference>
<dbReference type="GO" id="GO:0005829">
    <property type="term" value="C:cytosol"/>
    <property type="evidence" value="ECO:0007669"/>
    <property type="project" value="TreeGrafter"/>
</dbReference>
<dbReference type="GO" id="GO:0005840">
    <property type="term" value="C:ribosome"/>
    <property type="evidence" value="ECO:0007669"/>
    <property type="project" value="TreeGrafter"/>
</dbReference>
<dbReference type="GO" id="GO:0005524">
    <property type="term" value="F:ATP binding"/>
    <property type="evidence" value="ECO:0007669"/>
    <property type="project" value="UniProtKB-UniRule"/>
</dbReference>
<dbReference type="GO" id="GO:0016887">
    <property type="term" value="F:ATP hydrolysis activity"/>
    <property type="evidence" value="ECO:0007669"/>
    <property type="project" value="RHEA"/>
</dbReference>
<dbReference type="GO" id="GO:0003724">
    <property type="term" value="F:RNA helicase activity"/>
    <property type="evidence" value="ECO:0007669"/>
    <property type="project" value="UniProtKB-UniRule"/>
</dbReference>
<dbReference type="GO" id="GO:0033592">
    <property type="term" value="F:RNA strand annealing activity"/>
    <property type="evidence" value="ECO:0007669"/>
    <property type="project" value="TreeGrafter"/>
</dbReference>
<dbReference type="GO" id="GO:0070417">
    <property type="term" value="P:cellular response to cold"/>
    <property type="evidence" value="ECO:0007669"/>
    <property type="project" value="InterPro"/>
</dbReference>
<dbReference type="GO" id="GO:0000027">
    <property type="term" value="P:ribosomal large subunit assembly"/>
    <property type="evidence" value="ECO:0007669"/>
    <property type="project" value="UniProtKB-UniRule"/>
</dbReference>
<dbReference type="GO" id="GO:0006401">
    <property type="term" value="P:RNA catabolic process"/>
    <property type="evidence" value="ECO:0007669"/>
    <property type="project" value="UniProtKB-UniRule"/>
</dbReference>
<dbReference type="CDD" id="cd00268">
    <property type="entry name" value="DEADc"/>
    <property type="match status" value="1"/>
</dbReference>
<dbReference type="CDD" id="cd12499">
    <property type="entry name" value="RRM_EcCsdA_like"/>
    <property type="match status" value="1"/>
</dbReference>
<dbReference type="CDD" id="cd18787">
    <property type="entry name" value="SF2_C_DEAD"/>
    <property type="match status" value="1"/>
</dbReference>
<dbReference type="FunFam" id="3.30.70.330:FF:000068">
    <property type="entry name" value="ATP-dependent RNA helicase DeaD"/>
    <property type="match status" value="1"/>
</dbReference>
<dbReference type="FunFam" id="3.40.50.300:FF:000374">
    <property type="entry name" value="ATP-dependent RNA helicase DeaD"/>
    <property type="match status" value="1"/>
</dbReference>
<dbReference type="FunFam" id="3.40.50.300:FF:000108">
    <property type="entry name" value="ATP-dependent RNA helicase RhlE"/>
    <property type="match status" value="1"/>
</dbReference>
<dbReference type="Gene3D" id="3.30.70.330">
    <property type="match status" value="1"/>
</dbReference>
<dbReference type="Gene3D" id="3.40.50.300">
    <property type="entry name" value="P-loop containing nucleotide triphosphate hydrolases"/>
    <property type="match status" value="2"/>
</dbReference>
<dbReference type="HAMAP" id="MF_00964">
    <property type="entry name" value="DEAD_helicase_DeaD"/>
    <property type="match status" value="1"/>
</dbReference>
<dbReference type="InterPro" id="IPR034415">
    <property type="entry name" value="CsdA_RRM"/>
</dbReference>
<dbReference type="InterPro" id="IPR005580">
    <property type="entry name" value="DbpA/CsdA_RNA-bd_dom"/>
</dbReference>
<dbReference type="InterPro" id="IPR011545">
    <property type="entry name" value="DEAD/DEAH_box_helicase_dom"/>
</dbReference>
<dbReference type="InterPro" id="IPR050547">
    <property type="entry name" value="DEAD_box_RNA_helicases"/>
</dbReference>
<dbReference type="InterPro" id="IPR028618">
    <property type="entry name" value="DEAD_helicase_DeaD"/>
</dbReference>
<dbReference type="InterPro" id="IPR014001">
    <property type="entry name" value="Helicase_ATP-bd"/>
</dbReference>
<dbReference type="InterPro" id="IPR001650">
    <property type="entry name" value="Helicase_C-like"/>
</dbReference>
<dbReference type="InterPro" id="IPR012677">
    <property type="entry name" value="Nucleotide-bd_a/b_plait_sf"/>
</dbReference>
<dbReference type="InterPro" id="IPR027417">
    <property type="entry name" value="P-loop_NTPase"/>
</dbReference>
<dbReference type="InterPro" id="IPR000629">
    <property type="entry name" value="RNA-helicase_DEAD-box_CS"/>
</dbReference>
<dbReference type="InterPro" id="IPR014014">
    <property type="entry name" value="RNA_helicase_DEAD_Q_motif"/>
</dbReference>
<dbReference type="NCBIfam" id="NF008642">
    <property type="entry name" value="PRK11634.1"/>
    <property type="match status" value="1"/>
</dbReference>
<dbReference type="PANTHER" id="PTHR47963:SF8">
    <property type="entry name" value="ATP-DEPENDENT RNA HELICASE DEAD"/>
    <property type="match status" value="1"/>
</dbReference>
<dbReference type="PANTHER" id="PTHR47963">
    <property type="entry name" value="DEAD-BOX ATP-DEPENDENT RNA HELICASE 47, MITOCHONDRIAL"/>
    <property type="match status" value="1"/>
</dbReference>
<dbReference type="Pfam" id="PF03880">
    <property type="entry name" value="DbpA"/>
    <property type="match status" value="1"/>
</dbReference>
<dbReference type="Pfam" id="PF00270">
    <property type="entry name" value="DEAD"/>
    <property type="match status" value="1"/>
</dbReference>
<dbReference type="Pfam" id="PF25399">
    <property type="entry name" value="DeaD_dimer"/>
    <property type="match status" value="1"/>
</dbReference>
<dbReference type="Pfam" id="PF00271">
    <property type="entry name" value="Helicase_C"/>
    <property type="match status" value="1"/>
</dbReference>
<dbReference type="SMART" id="SM00487">
    <property type="entry name" value="DEXDc"/>
    <property type="match status" value="1"/>
</dbReference>
<dbReference type="SMART" id="SM00490">
    <property type="entry name" value="HELICc"/>
    <property type="match status" value="1"/>
</dbReference>
<dbReference type="SUPFAM" id="SSF52540">
    <property type="entry name" value="P-loop containing nucleoside triphosphate hydrolases"/>
    <property type="match status" value="1"/>
</dbReference>
<dbReference type="PROSITE" id="PS00039">
    <property type="entry name" value="DEAD_ATP_HELICASE"/>
    <property type="match status" value="1"/>
</dbReference>
<dbReference type="PROSITE" id="PS51192">
    <property type="entry name" value="HELICASE_ATP_BIND_1"/>
    <property type="match status" value="1"/>
</dbReference>
<dbReference type="PROSITE" id="PS51194">
    <property type="entry name" value="HELICASE_CTER"/>
    <property type="match status" value="1"/>
</dbReference>
<dbReference type="PROSITE" id="PS51195">
    <property type="entry name" value="Q_MOTIF"/>
    <property type="match status" value="1"/>
</dbReference>
<accession>P57453</accession>
<proteinExistence type="inferred from homology"/>
<keyword id="KW-0067">ATP-binding</keyword>
<keyword id="KW-0963">Cytoplasm</keyword>
<keyword id="KW-0347">Helicase</keyword>
<keyword id="KW-0378">Hydrolase</keyword>
<keyword id="KW-0547">Nucleotide-binding</keyword>
<keyword id="KW-1185">Reference proteome</keyword>
<keyword id="KW-0694">RNA-binding</keyword>
<keyword id="KW-0346">Stress response</keyword>
<sequence length="601" mass="68806">MTHIESTFSFLGLNPFIIQSLNEMGYVKPSPIQASCIPLLLEGRDVLGMAQTGSGKTAAFSLPLLHNLNINLKAPQILVLAPTRELAVQVAEAFSDFSKYMIGIHVLPLYGGQRYELQLRALRQGPQIVVGTPGRLLDHLKRGTLNLSNLHGLVLDEADEMLRMGFIEDVETIMAQIPKEHQTALFSATMPEAIRRISKRFMRNPKEIKIQSNITTRPDIKQSYWMVYGRKTDALIRFLEAEDFSATIIFVRTKNATLEVSEALERNGYNSAALNGDMNQALREQTLERLKNGRLDILIATDVAARGLDVDRISFVINYDIPMDSESYVHRIGRTGRAGRAGRALLFVENRERRLLRNIERTMKQSIPEVQLPKVELLCQRRLEQFAKKVQQQLESRDLDEYSALLDKLYSTDDLDIKTLAAALLKMAQGERPLIIKPDVIKRQSRDLLFQDDRRREDNRNSRTRRDRRDINKDAELYRIEVGRNDGVEVRHIVGAIANEGNINSRNIGNIKLFSSYSTIELPKGMSKDLLQTFNRTRILNKPINMKLLRDSRHYENKTTHRSIFNKDKNSNRRVSDGSFNKSNSPKKTEFKSSFFRRRNV</sequence>
<organism>
    <name type="scientific">Buchnera aphidicola subsp. Acyrthosiphon pisum (strain APS)</name>
    <name type="common">Acyrthosiphon pisum symbiotic bacterium</name>
    <dbReference type="NCBI Taxonomy" id="107806"/>
    <lineage>
        <taxon>Bacteria</taxon>
        <taxon>Pseudomonadati</taxon>
        <taxon>Pseudomonadota</taxon>
        <taxon>Gammaproteobacteria</taxon>
        <taxon>Enterobacterales</taxon>
        <taxon>Erwiniaceae</taxon>
        <taxon>Buchnera</taxon>
    </lineage>
</organism>
<evidence type="ECO:0000255" key="1">
    <source>
        <dbReference type="HAMAP-Rule" id="MF_00964"/>
    </source>
</evidence>
<evidence type="ECO:0000256" key="2">
    <source>
        <dbReference type="SAM" id="MobiDB-lite"/>
    </source>
</evidence>
<gene>
    <name evidence="1" type="primary">deaD</name>
    <name evidence="1" type="synonym">csdA</name>
    <name type="ordered locus">BU372</name>
</gene>
<reference key="1">
    <citation type="journal article" date="2000" name="Nature">
        <title>Genome sequence of the endocellular bacterial symbiont of aphids Buchnera sp. APS.</title>
        <authorList>
            <person name="Shigenobu S."/>
            <person name="Watanabe H."/>
            <person name="Hattori M."/>
            <person name="Sakaki Y."/>
            <person name="Ishikawa H."/>
        </authorList>
    </citation>
    <scope>NUCLEOTIDE SEQUENCE [LARGE SCALE GENOMIC DNA]</scope>
    <source>
        <strain>APS</strain>
    </source>
</reference>
<comment type="function">
    <text evidence="1">DEAD-box RNA helicase involved in various cellular processes at low temperature, including ribosome biogenesis, mRNA degradation and translation initiation.</text>
</comment>
<comment type="catalytic activity">
    <reaction evidence="1">
        <text>ATP + H2O = ADP + phosphate + H(+)</text>
        <dbReference type="Rhea" id="RHEA:13065"/>
        <dbReference type="ChEBI" id="CHEBI:15377"/>
        <dbReference type="ChEBI" id="CHEBI:15378"/>
        <dbReference type="ChEBI" id="CHEBI:30616"/>
        <dbReference type="ChEBI" id="CHEBI:43474"/>
        <dbReference type="ChEBI" id="CHEBI:456216"/>
        <dbReference type="EC" id="3.6.4.13"/>
    </reaction>
</comment>
<comment type="subcellular location">
    <subcellularLocation>
        <location evidence="1">Cytoplasm</location>
    </subcellularLocation>
</comment>
<comment type="similarity">
    <text evidence="1">Belongs to the DEAD box helicase family. DeaD/CsdA subfamily.</text>
</comment>